<gene>
    <name type="ordered locus">At2g04020</name>
    <name type="ORF">F3C11.13</name>
</gene>
<comment type="subcellular location">
    <subcellularLocation>
        <location evidence="3">Secreted</location>
    </subcellularLocation>
</comment>
<comment type="similarity">
    <text evidence="3">Belongs to the 'GDSL' lipolytic enzyme family.</text>
</comment>
<comment type="sequence caution" evidence="3">
    <conflict type="erroneous gene model prediction">
        <sequence resource="EMBL-CDS" id="AAD32921"/>
    </conflict>
</comment>
<comment type="sequence caution" evidence="3">
    <conflict type="erroneous gene model prediction">
        <sequence resource="EMBL-CDS" id="AEC05776"/>
    </conflict>
</comment>
<protein>
    <recommendedName>
        <fullName>GDSL esterase/lipase At2g04020</fullName>
        <ecNumber>3.1.1.-</ecNumber>
    </recommendedName>
    <alternativeName>
        <fullName>Extracellular lipase At2g04020</fullName>
    </alternativeName>
</protein>
<accession>Q9SIF3</accession>
<accession>F4IU86</accession>
<sequence>MGLPSSLESYLLLILLSFLNVSTIYSSKPSKEEAVLFGGNFPAFYVIGDSLVDPGNNNHLPTMIRANYPPYGSDFEGGKATGRFSNGKTIADYIAIYYKLPLVPAYLGLSDDRKDTISTGMNYASAGCGIRRLTGKIAGKCLSLSKQVDLFEETIEKHLKTNFKTPYELREHLAHSLFMTVIGVNDYAFFYTRLTDANDFADELLHKFLKKIEKLHKLGARKFFINNIKPLGCYPNIVAKTFMLGLRGPSTNRYSSNLLNTTGPCCPLDYDGSLTSSCKRRSKTCKAPDSTHIFFDPRHPTQLANFMYSIACFDERTICHVV</sequence>
<proteinExistence type="inferred from homology"/>
<name>GDL33_ARATH</name>
<reference key="1">
    <citation type="journal article" date="1999" name="Nature">
        <title>Sequence and analysis of chromosome 2 of the plant Arabidopsis thaliana.</title>
        <authorList>
            <person name="Lin X."/>
            <person name="Kaul S."/>
            <person name="Rounsley S.D."/>
            <person name="Shea T.P."/>
            <person name="Benito M.-I."/>
            <person name="Town C.D."/>
            <person name="Fujii C.Y."/>
            <person name="Mason T.M."/>
            <person name="Bowman C.L."/>
            <person name="Barnstead M.E."/>
            <person name="Feldblyum T.V."/>
            <person name="Buell C.R."/>
            <person name="Ketchum K.A."/>
            <person name="Lee J.J."/>
            <person name="Ronning C.M."/>
            <person name="Koo H.L."/>
            <person name="Moffat K.S."/>
            <person name="Cronin L.A."/>
            <person name="Shen M."/>
            <person name="Pai G."/>
            <person name="Van Aken S."/>
            <person name="Umayam L."/>
            <person name="Tallon L.J."/>
            <person name="Gill J.E."/>
            <person name="Adams M.D."/>
            <person name="Carrera A.J."/>
            <person name="Creasy T.H."/>
            <person name="Goodman H.M."/>
            <person name="Somerville C.R."/>
            <person name="Copenhaver G.P."/>
            <person name="Preuss D."/>
            <person name="Nierman W.C."/>
            <person name="White O."/>
            <person name="Eisen J.A."/>
            <person name="Salzberg S.L."/>
            <person name="Fraser C.M."/>
            <person name="Venter J.C."/>
        </authorList>
    </citation>
    <scope>NUCLEOTIDE SEQUENCE [LARGE SCALE GENOMIC DNA]</scope>
    <source>
        <strain>cv. Columbia</strain>
    </source>
</reference>
<reference key="2">
    <citation type="journal article" date="2017" name="Plant J.">
        <title>Araport11: a complete reannotation of the Arabidopsis thaliana reference genome.</title>
        <authorList>
            <person name="Cheng C.Y."/>
            <person name="Krishnakumar V."/>
            <person name="Chan A.P."/>
            <person name="Thibaud-Nissen F."/>
            <person name="Schobel S."/>
            <person name="Town C.D."/>
        </authorList>
    </citation>
    <scope>GENOME REANNOTATION</scope>
    <source>
        <strain>cv. Columbia</strain>
    </source>
</reference>
<reference key="3">
    <citation type="journal article" date="2004" name="Prog. Lipid Res.">
        <title>GDSL family of serine esterases/lipases.</title>
        <authorList>
            <person name="Akoh C.C."/>
            <person name="Lee G.-C."/>
            <person name="Liaw Y.-C."/>
            <person name="Huang T.-H."/>
            <person name="Shaw J.-F."/>
        </authorList>
    </citation>
    <scope>REVIEW</scope>
</reference>
<reference key="4">
    <citation type="journal article" date="2008" name="Pak. J. Biol. Sci.">
        <title>Sequence analysis of GDSL lipase gene family in Arabidopsis thaliana.</title>
        <authorList>
            <person name="Ling H."/>
        </authorList>
    </citation>
    <scope>GENE FAMILY</scope>
</reference>
<feature type="signal peptide" evidence="2">
    <location>
        <begin position="1"/>
        <end position="26"/>
    </location>
</feature>
<feature type="chain" id="PRO_0000367374" description="GDSL esterase/lipase At2g04020">
    <location>
        <begin position="27"/>
        <end position="322"/>
    </location>
</feature>
<feature type="active site" description="Nucleophile" evidence="1">
    <location>
        <position position="50"/>
    </location>
</feature>
<feature type="active site" evidence="1">
    <location>
        <position position="296"/>
    </location>
</feature>
<feature type="active site" evidence="1">
    <location>
        <position position="299"/>
    </location>
</feature>
<feature type="glycosylation site" description="N-linked (GlcNAc...) asparagine" evidence="2">
    <location>
        <position position="260"/>
    </location>
</feature>
<keyword id="KW-0325">Glycoprotein</keyword>
<keyword id="KW-0378">Hydrolase</keyword>
<keyword id="KW-0442">Lipid degradation</keyword>
<keyword id="KW-0443">Lipid metabolism</keyword>
<keyword id="KW-1185">Reference proteome</keyword>
<keyword id="KW-0964">Secreted</keyword>
<keyword id="KW-0732">Signal</keyword>
<dbReference type="EC" id="3.1.1.-"/>
<dbReference type="EMBL" id="AC007167">
    <property type="protein sequence ID" value="AAD32921.1"/>
    <property type="status" value="ALT_SEQ"/>
    <property type="molecule type" value="Genomic_DNA"/>
</dbReference>
<dbReference type="EMBL" id="CP002685">
    <property type="protein sequence ID" value="AEC05776.1"/>
    <property type="status" value="ALT_SEQ"/>
    <property type="molecule type" value="Genomic_DNA"/>
</dbReference>
<dbReference type="EMBL" id="CP002685">
    <property type="protein sequence ID" value="ANM62225.1"/>
    <property type="molecule type" value="Genomic_DNA"/>
</dbReference>
<dbReference type="PIR" id="G84453">
    <property type="entry name" value="G84453"/>
</dbReference>
<dbReference type="RefSeq" id="NP_001324400.1">
    <property type="nucleotide sequence ID" value="NM_001335212.1"/>
</dbReference>
<dbReference type="RefSeq" id="NP_178485.1">
    <property type="nucleotide sequence ID" value="NM_126437.2"/>
</dbReference>
<dbReference type="FunCoup" id="Q9SIF3">
    <property type="interactions" value="12"/>
</dbReference>
<dbReference type="GlyGen" id="Q9SIF3">
    <property type="glycosylation" value="1 site"/>
</dbReference>
<dbReference type="iPTMnet" id="Q9SIF3"/>
<dbReference type="PaxDb" id="3702-AT2G04020.1"/>
<dbReference type="EnsemblPlants" id="AT2G04020.2">
    <property type="protein sequence ID" value="AT2G04020.2"/>
    <property type="gene ID" value="AT2G04020"/>
</dbReference>
<dbReference type="GeneID" id="814928"/>
<dbReference type="Gramene" id="AT2G04020.2">
    <property type="protein sequence ID" value="AT2G04020.2"/>
    <property type="gene ID" value="AT2G04020"/>
</dbReference>
<dbReference type="KEGG" id="ath:AT2G04020"/>
<dbReference type="Araport" id="AT2G04020"/>
<dbReference type="TAIR" id="AT2G04020"/>
<dbReference type="HOGENOM" id="CLU_015101_0_1_1"/>
<dbReference type="InParanoid" id="Q9SIF3"/>
<dbReference type="OMA" id="FSKACKE"/>
<dbReference type="PhylomeDB" id="Q9SIF3"/>
<dbReference type="PRO" id="PR:Q9SIF3"/>
<dbReference type="Proteomes" id="UP000006548">
    <property type="component" value="Chromosome 2"/>
</dbReference>
<dbReference type="ExpressionAtlas" id="Q9SIF3">
    <property type="expression patterns" value="baseline and differential"/>
</dbReference>
<dbReference type="GO" id="GO:0005576">
    <property type="term" value="C:extracellular region"/>
    <property type="evidence" value="ECO:0007669"/>
    <property type="project" value="UniProtKB-SubCell"/>
</dbReference>
<dbReference type="GO" id="GO:0016788">
    <property type="term" value="F:hydrolase activity, acting on ester bonds"/>
    <property type="evidence" value="ECO:0007669"/>
    <property type="project" value="InterPro"/>
</dbReference>
<dbReference type="GO" id="GO:0016042">
    <property type="term" value="P:lipid catabolic process"/>
    <property type="evidence" value="ECO:0007669"/>
    <property type="project" value="UniProtKB-KW"/>
</dbReference>
<dbReference type="Gene3D" id="3.40.50.1110">
    <property type="entry name" value="SGNH hydrolase"/>
    <property type="match status" value="1"/>
</dbReference>
<dbReference type="InterPro" id="IPR001087">
    <property type="entry name" value="GDSL"/>
</dbReference>
<dbReference type="InterPro" id="IPR051238">
    <property type="entry name" value="GDSL_esterase/lipase"/>
</dbReference>
<dbReference type="InterPro" id="IPR036514">
    <property type="entry name" value="SGNH_hydro_sf"/>
</dbReference>
<dbReference type="PANTHER" id="PTHR45650:SF14">
    <property type="entry name" value="GDSL ESTERASE_LIPASE 7-LIKE"/>
    <property type="match status" value="1"/>
</dbReference>
<dbReference type="PANTHER" id="PTHR45650">
    <property type="entry name" value="GDSL-LIKE LIPASE/ACYLHYDROLASE-RELATED"/>
    <property type="match status" value="1"/>
</dbReference>
<dbReference type="Pfam" id="PF00657">
    <property type="entry name" value="Lipase_GDSL"/>
    <property type="match status" value="1"/>
</dbReference>
<evidence type="ECO:0000250" key="1"/>
<evidence type="ECO:0000255" key="2"/>
<evidence type="ECO:0000305" key="3"/>
<organism>
    <name type="scientific">Arabidopsis thaliana</name>
    <name type="common">Mouse-ear cress</name>
    <dbReference type="NCBI Taxonomy" id="3702"/>
    <lineage>
        <taxon>Eukaryota</taxon>
        <taxon>Viridiplantae</taxon>
        <taxon>Streptophyta</taxon>
        <taxon>Embryophyta</taxon>
        <taxon>Tracheophyta</taxon>
        <taxon>Spermatophyta</taxon>
        <taxon>Magnoliopsida</taxon>
        <taxon>eudicotyledons</taxon>
        <taxon>Gunneridae</taxon>
        <taxon>Pentapetalae</taxon>
        <taxon>rosids</taxon>
        <taxon>malvids</taxon>
        <taxon>Brassicales</taxon>
        <taxon>Brassicaceae</taxon>
        <taxon>Camelineae</taxon>
        <taxon>Arabidopsis</taxon>
    </lineage>
</organism>